<keyword id="KW-0175">Coiled coil</keyword>
<keyword id="KW-0963">Cytoplasm</keyword>
<keyword id="KW-0403">Intermediate filament</keyword>
<keyword id="KW-0416">Keratin</keyword>
<keyword id="KW-0488">Methylation</keyword>
<keyword id="KW-0597">Phosphoprotein</keyword>
<keyword id="KW-1185">Reference proteome</keyword>
<name>K22E_RAT</name>
<reference evidence="8" key="1">
    <citation type="journal article" date="2004" name="Nature">
        <title>Genome sequence of the Brown Norway rat yields insights into mammalian evolution.</title>
        <authorList>
            <person name="Gibbs R.A."/>
            <person name="Weinstock G.M."/>
            <person name="Metzker M.L."/>
            <person name="Muzny D.M."/>
            <person name="Sodergren E.J."/>
            <person name="Scherer S."/>
            <person name="Scott G."/>
            <person name="Steffen D."/>
            <person name="Worley K.C."/>
            <person name="Burch P.E."/>
            <person name="Okwuonu G."/>
            <person name="Hines S."/>
            <person name="Lewis L."/>
            <person name="Deramo C."/>
            <person name="Delgado O."/>
            <person name="Dugan-Rocha S."/>
            <person name="Miner G."/>
            <person name="Morgan M."/>
            <person name="Hawes A."/>
            <person name="Gill R."/>
            <person name="Holt R.A."/>
            <person name="Adams M.D."/>
            <person name="Amanatides P.G."/>
            <person name="Baden-Tillson H."/>
            <person name="Barnstead M."/>
            <person name="Chin S."/>
            <person name="Evans C.A."/>
            <person name="Ferriera S."/>
            <person name="Fosler C."/>
            <person name="Glodek A."/>
            <person name="Gu Z."/>
            <person name="Jennings D."/>
            <person name="Kraft C.L."/>
            <person name="Nguyen T."/>
            <person name="Pfannkoch C.M."/>
            <person name="Sitter C."/>
            <person name="Sutton G.G."/>
            <person name="Venter J.C."/>
            <person name="Woodage T."/>
            <person name="Smith D."/>
            <person name="Lee H.-M."/>
            <person name="Gustafson E."/>
            <person name="Cahill P."/>
            <person name="Kana A."/>
            <person name="Doucette-Stamm L."/>
            <person name="Weinstock K."/>
            <person name="Fechtel K."/>
            <person name="Weiss R.B."/>
            <person name="Dunn D.M."/>
            <person name="Green E.D."/>
            <person name="Blakesley R.W."/>
            <person name="Bouffard G.G."/>
            <person name="De Jong P.J."/>
            <person name="Osoegawa K."/>
            <person name="Zhu B."/>
            <person name="Marra M."/>
            <person name="Schein J."/>
            <person name="Bosdet I."/>
            <person name="Fjell C."/>
            <person name="Jones S."/>
            <person name="Krzywinski M."/>
            <person name="Mathewson C."/>
            <person name="Siddiqui A."/>
            <person name="Wye N."/>
            <person name="McPherson J."/>
            <person name="Zhao S."/>
            <person name="Fraser C.M."/>
            <person name="Shetty J."/>
            <person name="Shatsman S."/>
            <person name="Geer K."/>
            <person name="Chen Y."/>
            <person name="Abramzon S."/>
            <person name="Nierman W.C."/>
            <person name="Havlak P.H."/>
            <person name="Chen R."/>
            <person name="Durbin K.J."/>
            <person name="Egan A."/>
            <person name="Ren Y."/>
            <person name="Song X.-Z."/>
            <person name="Li B."/>
            <person name="Liu Y."/>
            <person name="Qin X."/>
            <person name="Cawley S."/>
            <person name="Cooney A.J."/>
            <person name="D'Souza L.M."/>
            <person name="Martin K."/>
            <person name="Wu J.Q."/>
            <person name="Gonzalez-Garay M.L."/>
            <person name="Jackson A.R."/>
            <person name="Kalafus K.J."/>
            <person name="McLeod M.P."/>
            <person name="Milosavljevic A."/>
            <person name="Virk D."/>
            <person name="Volkov A."/>
            <person name="Wheeler D.A."/>
            <person name="Zhang Z."/>
            <person name="Bailey J.A."/>
            <person name="Eichler E.E."/>
            <person name="Tuzun E."/>
            <person name="Birney E."/>
            <person name="Mongin E."/>
            <person name="Ureta-Vidal A."/>
            <person name="Woodwark C."/>
            <person name="Zdobnov E."/>
            <person name="Bork P."/>
            <person name="Suyama M."/>
            <person name="Torrents D."/>
            <person name="Alexandersson M."/>
            <person name="Trask B.J."/>
            <person name="Young J.M."/>
            <person name="Huang H."/>
            <person name="Wang H."/>
            <person name="Xing H."/>
            <person name="Daniels S."/>
            <person name="Gietzen D."/>
            <person name="Schmidt J."/>
            <person name="Stevens K."/>
            <person name="Vitt U."/>
            <person name="Wingrove J."/>
            <person name="Camara F."/>
            <person name="Mar Alba M."/>
            <person name="Abril J.F."/>
            <person name="Guigo R."/>
            <person name="Smit A."/>
            <person name="Dubchak I."/>
            <person name="Rubin E.M."/>
            <person name="Couronne O."/>
            <person name="Poliakov A."/>
            <person name="Huebner N."/>
            <person name="Ganten D."/>
            <person name="Goesele C."/>
            <person name="Hummel O."/>
            <person name="Kreitler T."/>
            <person name="Lee Y.-A."/>
            <person name="Monti J."/>
            <person name="Schulz H."/>
            <person name="Zimdahl H."/>
            <person name="Himmelbauer H."/>
            <person name="Lehrach H."/>
            <person name="Jacob H.J."/>
            <person name="Bromberg S."/>
            <person name="Gullings-Handley J."/>
            <person name="Jensen-Seaman M.I."/>
            <person name="Kwitek A.E."/>
            <person name="Lazar J."/>
            <person name="Pasko D."/>
            <person name="Tonellato P.J."/>
            <person name="Twigger S."/>
            <person name="Ponting C.P."/>
            <person name="Duarte J.M."/>
            <person name="Rice S."/>
            <person name="Goodstadt L."/>
            <person name="Beatson S.A."/>
            <person name="Emes R.D."/>
            <person name="Winter E.E."/>
            <person name="Webber C."/>
            <person name="Brandt P."/>
            <person name="Nyakatura G."/>
            <person name="Adetobi M."/>
            <person name="Chiaromonte F."/>
            <person name="Elnitski L."/>
            <person name="Eswara P."/>
            <person name="Hardison R.C."/>
            <person name="Hou M."/>
            <person name="Kolbe D."/>
            <person name="Makova K."/>
            <person name="Miller W."/>
            <person name="Nekrutenko A."/>
            <person name="Riemer C."/>
            <person name="Schwartz S."/>
            <person name="Taylor J."/>
            <person name="Yang S."/>
            <person name="Zhang Y."/>
            <person name="Lindpaintner K."/>
            <person name="Andrews T.D."/>
            <person name="Caccamo M."/>
            <person name="Clamp M."/>
            <person name="Clarke L."/>
            <person name="Curwen V."/>
            <person name="Durbin R.M."/>
            <person name="Eyras E."/>
            <person name="Searle S.M."/>
            <person name="Cooper G.M."/>
            <person name="Batzoglou S."/>
            <person name="Brudno M."/>
            <person name="Sidow A."/>
            <person name="Stone E.A."/>
            <person name="Payseur B.A."/>
            <person name="Bourque G."/>
            <person name="Lopez-Otin C."/>
            <person name="Puente X.S."/>
            <person name="Chakrabarti K."/>
            <person name="Chatterji S."/>
            <person name="Dewey C."/>
            <person name="Pachter L."/>
            <person name="Bray N."/>
            <person name="Yap V.B."/>
            <person name="Caspi A."/>
            <person name="Tesler G."/>
            <person name="Pevzner P.A."/>
            <person name="Haussler D."/>
            <person name="Roskin K.M."/>
            <person name="Baertsch R."/>
            <person name="Clawson H."/>
            <person name="Furey T.S."/>
            <person name="Hinrichs A.S."/>
            <person name="Karolchik D."/>
            <person name="Kent W.J."/>
            <person name="Rosenbloom K.R."/>
            <person name="Trumbower H."/>
            <person name="Weirauch M."/>
            <person name="Cooper D.N."/>
            <person name="Stenson P.D."/>
            <person name="Ma B."/>
            <person name="Brent M."/>
            <person name="Arumugam M."/>
            <person name="Shteynberg D."/>
            <person name="Copley R.R."/>
            <person name="Taylor M.S."/>
            <person name="Riethman H."/>
            <person name="Mudunuri U."/>
            <person name="Peterson J."/>
            <person name="Guyer M."/>
            <person name="Felsenfeld A."/>
            <person name="Old S."/>
            <person name="Mockrin S."/>
            <person name="Collins F.S."/>
        </authorList>
    </citation>
    <scope>NUCLEOTIDE SEQUENCE [LARGE SCALE GENOMIC DNA]</scope>
    <source>
        <strain evidence="7">Brown Norway</strain>
    </source>
</reference>
<reference evidence="8 9" key="2">
    <citation type="journal article" date="2004" name="Eur. J. Cell Biol.">
        <title>Comprehensive analysis of keratin gene clusters in humans and rodents.</title>
        <authorList>
            <person name="Hesse M."/>
            <person name="Zimek A."/>
            <person name="Weber K."/>
            <person name="Magin T.M."/>
        </authorList>
    </citation>
    <scope>IDENTIFICATION</scope>
</reference>
<feature type="chain" id="PRO_0000283764" description="Keratin, type II cytoskeletal 2 epidermal">
    <location>
        <begin position="1"/>
        <end position="685"/>
    </location>
</feature>
<feature type="domain" description="IF rod" evidence="5">
    <location>
        <begin position="197"/>
        <end position="511"/>
    </location>
</feature>
<feature type="region of interest" description="Head" evidence="4">
    <location>
        <begin position="1"/>
        <end position="196"/>
    </location>
</feature>
<feature type="region of interest" description="Disordered" evidence="6">
    <location>
        <begin position="1"/>
        <end position="20"/>
    </location>
</feature>
<feature type="region of interest" description="Coil 1A" evidence="4">
    <location>
        <begin position="197"/>
        <end position="232"/>
    </location>
</feature>
<feature type="region of interest" description="Linker 1" evidence="4">
    <location>
        <begin position="233"/>
        <end position="251"/>
    </location>
</feature>
<feature type="region of interest" description="Coil 1B" evidence="4">
    <location>
        <begin position="252"/>
        <end position="343"/>
    </location>
</feature>
<feature type="region of interest" description="Linker 12" evidence="4">
    <location>
        <begin position="344"/>
        <end position="367"/>
    </location>
</feature>
<feature type="region of interest" description="Coil 2" evidence="4">
    <location>
        <begin position="368"/>
        <end position="507"/>
    </location>
</feature>
<feature type="region of interest" description="Tail" evidence="4">
    <location>
        <begin position="508"/>
        <end position="685"/>
    </location>
</feature>
<feature type="region of interest" description="Disordered" evidence="6">
    <location>
        <begin position="532"/>
        <end position="685"/>
    </location>
</feature>
<feature type="compositionally biased region" description="Gly residues" evidence="6">
    <location>
        <begin position="538"/>
        <end position="678"/>
    </location>
</feature>
<feature type="site" description="Stutter" evidence="4">
    <location>
        <position position="449"/>
    </location>
</feature>
<feature type="modified residue" description="Asymmetric dimethylarginine" evidence="3">
    <location>
        <position position="22"/>
    </location>
</feature>
<feature type="modified residue" description="Phosphoserine" evidence="1">
    <location>
        <position position="25"/>
    </location>
</feature>
<feature type="modified residue" description="Phosphoserine" evidence="1">
    <location>
        <position position="28"/>
    </location>
</feature>
<feature type="modified residue" description="Omega-N-methylarginine" evidence="3">
    <location>
        <position position="52"/>
    </location>
</feature>
<feature type="modified residue" description="Phosphoserine" evidence="2">
    <location>
        <position position="64"/>
    </location>
</feature>
<feature type="modified residue" description="Omega-N-methylarginine" evidence="3">
    <location>
        <position position="554"/>
    </location>
</feature>
<feature type="modified residue" description="Omega-N-methylarginine" evidence="3">
    <location>
        <position position="588"/>
    </location>
</feature>
<feature type="modified residue" description="Omega-N-methylarginine" evidence="1">
    <location>
        <position position="603"/>
    </location>
</feature>
<feature type="modified residue" description="Omega-N-methylarginine" evidence="1">
    <location>
        <position position="653"/>
    </location>
</feature>
<protein>
    <recommendedName>
        <fullName>Keratin, type II cytoskeletal 2 epidermal</fullName>
    </recommendedName>
    <alternativeName>
        <fullName>Cytokeratin-2e</fullName>
        <shortName>CK-2e</shortName>
    </alternativeName>
    <alternativeName>
        <fullName>Epithelial keratin-2e</fullName>
    </alternativeName>
    <alternativeName>
        <fullName>Keratin-2 epidermis</fullName>
    </alternativeName>
    <alternativeName>
        <fullName>Keratin-2e</fullName>
        <shortName>K2e</shortName>
    </alternativeName>
    <alternativeName>
        <fullName>Type-II keratin Kb2</fullName>
    </alternativeName>
</protein>
<sequence length="685" mass="69127">MSCQISCKSRRGGGGGGGGGFRGFSSGSAVVSGGSRRSTSGFSCLSRHGGGRGGSGGGGFGSQSLVGLGGYKSISSSVAGYGGGFGGRSYGGFGGGSGFGGSGGFGGGSGFGGGRGFGGGSGFGGGSGFGGGSGFGGGSGFGGGGFGGGRFGGGPGGFGGPGGFPGGGIHEVSVNQSLLQPLDVKVDPEIQNVKSQEREQIKTLNNKFASFIDTVRFLEQQNQVLHTKWELLQQLDVGTRTTNLDPVFQAYIGILKKQVDRLTAERNSQDSELNNMQDLVEDFKKKYEDEINKRTSAENDFVTIKKDVDSCYMDKTELQAKMEMLTQEVDFLRTLYDTELSQLQQNVTDTNVILSMDNNRNLDLDSIIAEVQSQYEIIAHKSKAESEELYHSKANEELQVTAVKHGDSLKEIKMEISELNRTIQRLQGEISHVKKQCKGVQDSIADAEQRGEHAIKDARGKLTDLEEALQQGRENLARLLRDYQELMNVKLALDVEIATYRKLLEGEECRMSGDFSDNVSVSVTSSTISSSVASKAGFGSGGQSSGGRGSYGGRGGGSTYGSGGRSSGVRGSGSGSGGGGYSSGGGSRGGSGGGGYSTGGGSRGGSSSGGGGYSSGGGSRGDSSSGGGSRGGSGGGSRGGSGGGGYSSGGGSRGGSSSGGAVSGSERGGSGSGEGCGSGVTFSFR</sequence>
<accession>Q6IG02</accession>
<evidence type="ECO:0000250" key="1">
    <source>
        <dbReference type="UniProtKB" id="P04104"/>
    </source>
</evidence>
<evidence type="ECO:0000250" key="2">
    <source>
        <dbReference type="UniProtKB" id="P35908"/>
    </source>
</evidence>
<evidence type="ECO:0000250" key="3">
    <source>
        <dbReference type="UniProtKB" id="Q3TTY5"/>
    </source>
</evidence>
<evidence type="ECO:0000255" key="4"/>
<evidence type="ECO:0000255" key="5">
    <source>
        <dbReference type="PROSITE-ProRule" id="PRU01188"/>
    </source>
</evidence>
<evidence type="ECO:0000256" key="6">
    <source>
        <dbReference type="SAM" id="MobiDB-lite"/>
    </source>
</evidence>
<evidence type="ECO:0000269" key="7">
    <source>
    </source>
</evidence>
<evidence type="ECO:0000305" key="8"/>
<evidence type="ECO:0000312" key="9">
    <source>
        <dbReference type="EMBL" id="DAA02228.1"/>
    </source>
</evidence>
<evidence type="ECO:0000312" key="10">
    <source>
        <dbReference type="RGD" id="1303297"/>
    </source>
</evidence>
<comment type="function">
    <text evidence="2 3">Probably contributes to terminal cornification. Associated with keratinocyte activation, proliferation and keratinization (By similarity). Required for maintenance of corneocytes and keratin filaments in suprabasal keratinocytes in the epidermis of the ear, potentially via moderation of expression and localization of keratins and their partner proteins (By similarity). Plays a role in the establishment of the epidermal barrier on plantar skin (By similarity).</text>
</comment>
<comment type="subunit">
    <text evidence="3">Heterotetramer of two type I and two type II keratins. Associates with KRT10.</text>
</comment>
<comment type="subcellular location">
    <subcellularLocation>
        <location evidence="2">Cytoplasm</location>
    </subcellularLocation>
</comment>
<comment type="miscellaneous">
    <text evidence="8">There are two types of cytoskeletal and microfibrillar keratin: I (acidic; 40-55 kDa) and II (neutral to basic; 56-70 kDa).</text>
</comment>
<comment type="similarity">
    <text evidence="5">Belongs to the intermediate filament family.</text>
</comment>
<gene>
    <name evidence="2" type="primary">Krt2</name>
    <name evidence="10" type="synonym">Kb2</name>
    <name evidence="2" type="synonym">Krt2a</name>
</gene>
<proteinExistence type="inferred from homology"/>
<organism>
    <name type="scientific">Rattus norvegicus</name>
    <name type="common">Rat</name>
    <dbReference type="NCBI Taxonomy" id="10116"/>
    <lineage>
        <taxon>Eukaryota</taxon>
        <taxon>Metazoa</taxon>
        <taxon>Chordata</taxon>
        <taxon>Craniata</taxon>
        <taxon>Vertebrata</taxon>
        <taxon>Euteleostomi</taxon>
        <taxon>Mammalia</taxon>
        <taxon>Eutheria</taxon>
        <taxon>Euarchontoglires</taxon>
        <taxon>Glires</taxon>
        <taxon>Rodentia</taxon>
        <taxon>Myomorpha</taxon>
        <taxon>Muroidea</taxon>
        <taxon>Muridae</taxon>
        <taxon>Murinae</taxon>
        <taxon>Rattus</taxon>
    </lineage>
</organism>
<dbReference type="EMBL" id="AABR03055962">
    <property type="status" value="NOT_ANNOTATED_CDS"/>
    <property type="molecule type" value="Genomic_DNA"/>
</dbReference>
<dbReference type="EMBL" id="BK003983">
    <property type="protein sequence ID" value="DAA02228.1"/>
    <property type="molecule type" value="mRNA"/>
</dbReference>
<dbReference type="RefSeq" id="NP_001008899.1">
    <property type="nucleotide sequence ID" value="NM_001008899.1"/>
</dbReference>
<dbReference type="SMR" id="Q6IG02"/>
<dbReference type="FunCoup" id="Q6IG02">
    <property type="interactions" value="34"/>
</dbReference>
<dbReference type="STRING" id="10116.ENSRNOP00000070051"/>
<dbReference type="iPTMnet" id="Q6IG02"/>
<dbReference type="PhosphoSitePlus" id="Q6IG02"/>
<dbReference type="PaxDb" id="10116-ENSRNOP00000050471"/>
<dbReference type="GeneID" id="406228"/>
<dbReference type="KEGG" id="rno:406228"/>
<dbReference type="UCSC" id="RGD:1303297">
    <property type="organism name" value="rat"/>
</dbReference>
<dbReference type="AGR" id="RGD:1303297"/>
<dbReference type="CTD" id="3849"/>
<dbReference type="RGD" id="1303297">
    <property type="gene designation" value="Krt2"/>
</dbReference>
<dbReference type="eggNOG" id="ENOG502QTM6">
    <property type="taxonomic scope" value="Eukaryota"/>
</dbReference>
<dbReference type="InParanoid" id="Q6IG02"/>
<dbReference type="PhylomeDB" id="Q6IG02"/>
<dbReference type="Reactome" id="R-RNO-6805567">
    <property type="pathway name" value="Keratinization"/>
</dbReference>
<dbReference type="Reactome" id="R-RNO-6809371">
    <property type="pathway name" value="Formation of the cornified envelope"/>
</dbReference>
<dbReference type="PRO" id="PR:Q6IG02"/>
<dbReference type="Proteomes" id="UP000002494">
    <property type="component" value="Unplaced"/>
</dbReference>
<dbReference type="GO" id="GO:0001533">
    <property type="term" value="C:cornified envelope"/>
    <property type="evidence" value="ECO:0000266"/>
    <property type="project" value="RGD"/>
</dbReference>
<dbReference type="GO" id="GO:0005737">
    <property type="term" value="C:cytoplasm"/>
    <property type="evidence" value="ECO:0000250"/>
    <property type="project" value="UniProtKB"/>
</dbReference>
<dbReference type="GO" id="GO:0045095">
    <property type="term" value="C:keratin filament"/>
    <property type="evidence" value="ECO:0000266"/>
    <property type="project" value="RGD"/>
</dbReference>
<dbReference type="GO" id="GO:0008092">
    <property type="term" value="F:cytoskeletal protein binding"/>
    <property type="evidence" value="ECO:0000266"/>
    <property type="project" value="RGD"/>
</dbReference>
<dbReference type="GO" id="GO:0030280">
    <property type="term" value="F:structural constituent of skin epidermis"/>
    <property type="evidence" value="ECO:0000266"/>
    <property type="project" value="RGD"/>
</dbReference>
<dbReference type="GO" id="GO:0008544">
    <property type="term" value="P:epidermis development"/>
    <property type="evidence" value="ECO:0000266"/>
    <property type="project" value="RGD"/>
</dbReference>
<dbReference type="GO" id="GO:0045109">
    <property type="term" value="P:intermediate filament organization"/>
    <property type="evidence" value="ECO:0000266"/>
    <property type="project" value="RGD"/>
</dbReference>
<dbReference type="GO" id="GO:0031424">
    <property type="term" value="P:keratinization"/>
    <property type="evidence" value="ECO:0000266"/>
    <property type="project" value="RGD"/>
</dbReference>
<dbReference type="GO" id="GO:0032980">
    <property type="term" value="P:keratinocyte activation"/>
    <property type="evidence" value="ECO:0000266"/>
    <property type="project" value="RGD"/>
</dbReference>
<dbReference type="GO" id="GO:0003334">
    <property type="term" value="P:keratinocyte development"/>
    <property type="evidence" value="ECO:0000266"/>
    <property type="project" value="RGD"/>
</dbReference>
<dbReference type="GO" id="GO:0051546">
    <property type="term" value="P:keratinocyte migration"/>
    <property type="evidence" value="ECO:0000266"/>
    <property type="project" value="RGD"/>
</dbReference>
<dbReference type="GO" id="GO:0043616">
    <property type="term" value="P:keratinocyte proliferation"/>
    <property type="evidence" value="ECO:0000266"/>
    <property type="project" value="RGD"/>
</dbReference>
<dbReference type="GO" id="GO:0045684">
    <property type="term" value="P:positive regulation of epidermis development"/>
    <property type="evidence" value="ECO:0000250"/>
    <property type="project" value="UniProtKB"/>
</dbReference>
<dbReference type="FunFam" id="1.20.5.1160:FF:000001">
    <property type="entry name" value="Keratin type II"/>
    <property type="match status" value="1"/>
</dbReference>
<dbReference type="FunFam" id="1.20.5.170:FF:000004">
    <property type="entry name" value="Keratin, type II cytoskeletal 5"/>
    <property type="match status" value="1"/>
</dbReference>
<dbReference type="FunFam" id="1.20.5.500:FF:000001">
    <property type="entry name" value="Type II keratin 23"/>
    <property type="match status" value="1"/>
</dbReference>
<dbReference type="Gene3D" id="1.20.5.170">
    <property type="match status" value="1"/>
</dbReference>
<dbReference type="Gene3D" id="1.20.5.500">
    <property type="entry name" value="Single helix bin"/>
    <property type="match status" value="1"/>
</dbReference>
<dbReference type="Gene3D" id="1.20.5.1160">
    <property type="entry name" value="Vasodilator-stimulated phosphoprotein"/>
    <property type="match status" value="1"/>
</dbReference>
<dbReference type="InterPro" id="IPR018039">
    <property type="entry name" value="IF_conserved"/>
</dbReference>
<dbReference type="InterPro" id="IPR039008">
    <property type="entry name" value="IF_rod_dom"/>
</dbReference>
<dbReference type="InterPro" id="IPR032444">
    <property type="entry name" value="Keratin_2_head"/>
</dbReference>
<dbReference type="InterPro" id="IPR003054">
    <property type="entry name" value="Keratin_II"/>
</dbReference>
<dbReference type="PANTHER" id="PTHR45616">
    <property type="entry name" value="GATA-TYPE DOMAIN-CONTAINING PROTEIN"/>
    <property type="match status" value="1"/>
</dbReference>
<dbReference type="PANTHER" id="PTHR45616:SF14">
    <property type="entry name" value="KERATIN, TYPE II CYTOSKELETAL 2 EPIDERMAL"/>
    <property type="match status" value="1"/>
</dbReference>
<dbReference type="Pfam" id="PF00038">
    <property type="entry name" value="Filament"/>
    <property type="match status" value="1"/>
</dbReference>
<dbReference type="Pfam" id="PF16208">
    <property type="entry name" value="Keratin_2_head"/>
    <property type="match status" value="1"/>
</dbReference>
<dbReference type="PRINTS" id="PR01276">
    <property type="entry name" value="TYPE2KERATIN"/>
</dbReference>
<dbReference type="SMART" id="SM01391">
    <property type="entry name" value="Filament"/>
    <property type="match status" value="1"/>
</dbReference>
<dbReference type="SUPFAM" id="SSF64593">
    <property type="entry name" value="Intermediate filament protein, coiled coil region"/>
    <property type="match status" value="3"/>
</dbReference>
<dbReference type="PROSITE" id="PS00226">
    <property type="entry name" value="IF_ROD_1"/>
    <property type="match status" value="1"/>
</dbReference>
<dbReference type="PROSITE" id="PS51842">
    <property type="entry name" value="IF_ROD_2"/>
    <property type="match status" value="1"/>
</dbReference>